<reference key="1">
    <citation type="submission" date="2003-01" db="EMBL/GenBank/DDBJ databases">
        <title>Chloroplast DNA phylogeny of tribe Heliantheae (Asteraceae).</title>
        <authorList>
            <person name="Panero J.L."/>
            <person name="Baldwin B.G."/>
            <person name="Schilling E.E."/>
            <person name="Clevinger J.A."/>
        </authorList>
    </citation>
    <scope>NUCLEOTIDE SEQUENCE [GENOMIC DNA]</scope>
</reference>
<proteinExistence type="inferred from homology"/>
<comment type="function">
    <text evidence="1">NDH shuttles electrons from NAD(P)H:plastoquinone, via FMN and iron-sulfur (Fe-S) centers, to quinones in the photosynthetic chain and possibly in a chloroplast respiratory chain. The immediate electron acceptor for the enzyme in this species is believed to be plastoquinone. Couples the redox reaction to proton translocation, and thus conserves the redox energy in a proton gradient.</text>
</comment>
<comment type="catalytic activity">
    <reaction evidence="1">
        <text>a plastoquinone + NADH + (n+1) H(+)(in) = a plastoquinol + NAD(+) + n H(+)(out)</text>
        <dbReference type="Rhea" id="RHEA:42608"/>
        <dbReference type="Rhea" id="RHEA-COMP:9561"/>
        <dbReference type="Rhea" id="RHEA-COMP:9562"/>
        <dbReference type="ChEBI" id="CHEBI:15378"/>
        <dbReference type="ChEBI" id="CHEBI:17757"/>
        <dbReference type="ChEBI" id="CHEBI:57540"/>
        <dbReference type="ChEBI" id="CHEBI:57945"/>
        <dbReference type="ChEBI" id="CHEBI:62192"/>
    </reaction>
</comment>
<comment type="catalytic activity">
    <reaction evidence="1">
        <text>a plastoquinone + NADPH + (n+1) H(+)(in) = a plastoquinol + NADP(+) + n H(+)(out)</text>
        <dbReference type="Rhea" id="RHEA:42612"/>
        <dbReference type="Rhea" id="RHEA-COMP:9561"/>
        <dbReference type="Rhea" id="RHEA-COMP:9562"/>
        <dbReference type="ChEBI" id="CHEBI:15378"/>
        <dbReference type="ChEBI" id="CHEBI:17757"/>
        <dbReference type="ChEBI" id="CHEBI:57783"/>
        <dbReference type="ChEBI" id="CHEBI:58349"/>
        <dbReference type="ChEBI" id="CHEBI:62192"/>
    </reaction>
</comment>
<comment type="cofactor">
    <cofactor evidence="1">
        <name>[4Fe-4S] cluster</name>
        <dbReference type="ChEBI" id="CHEBI:49883"/>
    </cofactor>
    <text evidence="1">Binds 2 [4Fe-4S] clusters per subunit.</text>
</comment>
<comment type="subunit">
    <text evidence="1">NDH is composed of at least 16 different subunits, 5 of which are encoded in the nucleus.</text>
</comment>
<comment type="subcellular location">
    <subcellularLocation>
        <location evidence="1">Plastid</location>
        <location evidence="1">Chloroplast thylakoid membrane</location>
        <topology evidence="1">Peripheral membrane protein</topology>
    </subcellularLocation>
</comment>
<comment type="similarity">
    <text evidence="1">Belongs to the complex I 23 kDa subunit family.</text>
</comment>
<evidence type="ECO:0000255" key="1">
    <source>
        <dbReference type="HAMAP-Rule" id="MF_01351"/>
    </source>
</evidence>
<dbReference type="EC" id="7.1.1.-" evidence="1"/>
<dbReference type="EMBL" id="AF383769">
    <property type="protein sequence ID" value="AAN61711.1"/>
    <property type="molecule type" value="Genomic_DNA"/>
</dbReference>
<dbReference type="SMR" id="Q8HVU3"/>
<dbReference type="GO" id="GO:0009535">
    <property type="term" value="C:chloroplast thylakoid membrane"/>
    <property type="evidence" value="ECO:0007669"/>
    <property type="project" value="UniProtKB-SubCell"/>
</dbReference>
<dbReference type="GO" id="GO:0051539">
    <property type="term" value="F:4 iron, 4 sulfur cluster binding"/>
    <property type="evidence" value="ECO:0007669"/>
    <property type="project" value="UniProtKB-KW"/>
</dbReference>
<dbReference type="GO" id="GO:0005506">
    <property type="term" value="F:iron ion binding"/>
    <property type="evidence" value="ECO:0007669"/>
    <property type="project" value="UniProtKB-UniRule"/>
</dbReference>
<dbReference type="GO" id="GO:0008137">
    <property type="term" value="F:NADH dehydrogenase (ubiquinone) activity"/>
    <property type="evidence" value="ECO:0007669"/>
    <property type="project" value="InterPro"/>
</dbReference>
<dbReference type="GO" id="GO:0048038">
    <property type="term" value="F:quinone binding"/>
    <property type="evidence" value="ECO:0007669"/>
    <property type="project" value="UniProtKB-KW"/>
</dbReference>
<dbReference type="GO" id="GO:0019684">
    <property type="term" value="P:photosynthesis, light reaction"/>
    <property type="evidence" value="ECO:0007669"/>
    <property type="project" value="UniProtKB-UniRule"/>
</dbReference>
<dbReference type="FunFam" id="3.30.70.3270:FF:000006">
    <property type="entry name" value="NAD(P)H-quinone oxidoreductase subunit I, chloroplastic"/>
    <property type="match status" value="1"/>
</dbReference>
<dbReference type="Gene3D" id="3.30.70.3270">
    <property type="match status" value="1"/>
</dbReference>
<dbReference type="HAMAP" id="MF_01351">
    <property type="entry name" value="NDH1_NuoI"/>
    <property type="match status" value="1"/>
</dbReference>
<dbReference type="InterPro" id="IPR017896">
    <property type="entry name" value="4Fe4S_Fe-S-bd"/>
</dbReference>
<dbReference type="InterPro" id="IPR017900">
    <property type="entry name" value="4Fe4S_Fe_S_CS"/>
</dbReference>
<dbReference type="InterPro" id="IPR010226">
    <property type="entry name" value="NADH_quinone_OxRdtase_chainI"/>
</dbReference>
<dbReference type="InterPro" id="IPR004497">
    <property type="entry name" value="NDHI"/>
</dbReference>
<dbReference type="NCBIfam" id="TIGR00403">
    <property type="entry name" value="ndhI"/>
    <property type="match status" value="1"/>
</dbReference>
<dbReference type="NCBIfam" id="TIGR01971">
    <property type="entry name" value="NuoI"/>
    <property type="match status" value="1"/>
</dbReference>
<dbReference type="NCBIfam" id="NF004537">
    <property type="entry name" value="PRK05888.1-3"/>
    <property type="match status" value="1"/>
</dbReference>
<dbReference type="PANTHER" id="PTHR47275">
    <property type="entry name" value="NAD(P)H-QUINONE OXIDOREDUCTASE SUBUNIT I, CHLOROPLASTIC"/>
    <property type="match status" value="1"/>
</dbReference>
<dbReference type="PANTHER" id="PTHR47275:SF1">
    <property type="entry name" value="NAD(P)H-QUINONE OXIDOREDUCTASE SUBUNIT I, CHLOROPLASTIC"/>
    <property type="match status" value="1"/>
</dbReference>
<dbReference type="Pfam" id="PF00037">
    <property type="entry name" value="Fer4"/>
    <property type="match status" value="2"/>
</dbReference>
<dbReference type="SUPFAM" id="SSF54862">
    <property type="entry name" value="4Fe-4S ferredoxins"/>
    <property type="match status" value="1"/>
</dbReference>
<dbReference type="PROSITE" id="PS00198">
    <property type="entry name" value="4FE4S_FER_1"/>
    <property type="match status" value="2"/>
</dbReference>
<dbReference type="PROSITE" id="PS51379">
    <property type="entry name" value="4FE4S_FER_2"/>
    <property type="match status" value="2"/>
</dbReference>
<sequence length="166" mass="19475">MFPMVTEFMNYGQQTVRAARYIGQGFMITLSHANRLPVTIQYPYEKLITSERFRGRIHFEFDKCIACEVCVRVCPIDLPVVDWKLETDIRKKRLLNYSIDFGICIFCGNCVEYCPTNCLSMTEEYELSTYDRHELNYNQIALGRLPMSIIDDYTIRTILNLPEIKT</sequence>
<gene>
    <name evidence="1" type="primary">ndhI</name>
</gene>
<geneLocation type="chloroplast"/>
<keyword id="KW-0004">4Fe-4S</keyword>
<keyword id="KW-0150">Chloroplast</keyword>
<keyword id="KW-0408">Iron</keyword>
<keyword id="KW-0411">Iron-sulfur</keyword>
<keyword id="KW-0472">Membrane</keyword>
<keyword id="KW-0479">Metal-binding</keyword>
<keyword id="KW-0520">NAD</keyword>
<keyword id="KW-0521">NADP</keyword>
<keyword id="KW-0934">Plastid</keyword>
<keyword id="KW-0618">Plastoquinone</keyword>
<keyword id="KW-0874">Quinone</keyword>
<keyword id="KW-0677">Repeat</keyword>
<keyword id="KW-0793">Thylakoid</keyword>
<keyword id="KW-1278">Translocase</keyword>
<name>NDHI_CYMVE</name>
<feature type="chain" id="PRO_0000250772" description="NAD(P)H-quinone oxidoreductase subunit I, chloroplastic">
    <location>
        <begin position="1"/>
        <end position="166"/>
    </location>
</feature>
<feature type="domain" description="4Fe-4S ferredoxin-type 1" evidence="1">
    <location>
        <begin position="55"/>
        <end position="84"/>
    </location>
</feature>
<feature type="domain" description="4Fe-4S ferredoxin-type 2" evidence="1">
    <location>
        <begin position="95"/>
        <end position="124"/>
    </location>
</feature>
<feature type="binding site" evidence="1">
    <location>
        <position position="64"/>
    </location>
    <ligand>
        <name>[4Fe-4S] cluster</name>
        <dbReference type="ChEBI" id="CHEBI:49883"/>
        <label>1</label>
    </ligand>
</feature>
<feature type="binding site" evidence="1">
    <location>
        <position position="67"/>
    </location>
    <ligand>
        <name>[4Fe-4S] cluster</name>
        <dbReference type="ChEBI" id="CHEBI:49883"/>
        <label>1</label>
    </ligand>
</feature>
<feature type="binding site" evidence="1">
    <location>
        <position position="70"/>
    </location>
    <ligand>
        <name>[4Fe-4S] cluster</name>
        <dbReference type="ChEBI" id="CHEBI:49883"/>
        <label>1</label>
    </ligand>
</feature>
<feature type="binding site" evidence="1">
    <location>
        <position position="74"/>
    </location>
    <ligand>
        <name>[4Fe-4S] cluster</name>
        <dbReference type="ChEBI" id="CHEBI:49883"/>
        <label>2</label>
    </ligand>
</feature>
<feature type="binding site" evidence="1">
    <location>
        <position position="104"/>
    </location>
    <ligand>
        <name>[4Fe-4S] cluster</name>
        <dbReference type="ChEBI" id="CHEBI:49883"/>
        <label>2</label>
    </ligand>
</feature>
<feature type="binding site" evidence="1">
    <location>
        <position position="107"/>
    </location>
    <ligand>
        <name>[4Fe-4S] cluster</name>
        <dbReference type="ChEBI" id="CHEBI:49883"/>
        <label>2</label>
    </ligand>
</feature>
<feature type="binding site" evidence="1">
    <location>
        <position position="110"/>
    </location>
    <ligand>
        <name>[4Fe-4S] cluster</name>
        <dbReference type="ChEBI" id="CHEBI:49883"/>
        <label>2</label>
    </ligand>
</feature>
<feature type="binding site" evidence="1">
    <location>
        <position position="114"/>
    </location>
    <ligand>
        <name>[4Fe-4S] cluster</name>
        <dbReference type="ChEBI" id="CHEBI:49883"/>
        <label>1</label>
    </ligand>
</feature>
<accession>Q8HVU3</accession>
<organism>
    <name type="scientific">Cymophora venezuelensis</name>
    <dbReference type="NCBI Taxonomy" id="183016"/>
    <lineage>
        <taxon>Eukaryota</taxon>
        <taxon>Viridiplantae</taxon>
        <taxon>Streptophyta</taxon>
        <taxon>Embryophyta</taxon>
        <taxon>Tracheophyta</taxon>
        <taxon>Spermatophyta</taxon>
        <taxon>Magnoliopsida</taxon>
        <taxon>eudicotyledons</taxon>
        <taxon>Gunneridae</taxon>
        <taxon>Pentapetalae</taxon>
        <taxon>asterids</taxon>
        <taxon>campanulids</taxon>
        <taxon>Asterales</taxon>
        <taxon>Asteraceae</taxon>
        <taxon>Asteroideae</taxon>
        <taxon>Heliantheae alliance</taxon>
        <taxon>Millerieae</taxon>
        <taxon>Cymophora</taxon>
    </lineage>
</organism>
<protein>
    <recommendedName>
        <fullName evidence="1">NAD(P)H-quinone oxidoreductase subunit I, chloroplastic</fullName>
        <ecNumber evidence="1">7.1.1.-</ecNumber>
    </recommendedName>
    <alternativeName>
        <fullName evidence="1">NAD(P)H dehydrogenase subunit I</fullName>
        <shortName evidence="1">NDH subunit I</shortName>
    </alternativeName>
    <alternativeName>
        <fullName evidence="1">NADH-plastoquinone oxidoreductase subunit I</fullName>
    </alternativeName>
</protein>